<accession>Q0ABH9</accession>
<dbReference type="EMBL" id="CP000453">
    <property type="protein sequence ID" value="ABI55808.1"/>
    <property type="molecule type" value="Genomic_DNA"/>
</dbReference>
<dbReference type="RefSeq" id="WP_011628204.1">
    <property type="nucleotide sequence ID" value="NC_008340.1"/>
</dbReference>
<dbReference type="SMR" id="Q0ABH9"/>
<dbReference type="KEGG" id="aeh:Mlg_0454"/>
<dbReference type="eggNOG" id="COG0049">
    <property type="taxonomic scope" value="Bacteria"/>
</dbReference>
<dbReference type="HOGENOM" id="CLU_072226_1_1_6"/>
<dbReference type="OrthoDB" id="9807653at2"/>
<dbReference type="Proteomes" id="UP000001962">
    <property type="component" value="Chromosome"/>
</dbReference>
<dbReference type="GO" id="GO:0015935">
    <property type="term" value="C:small ribosomal subunit"/>
    <property type="evidence" value="ECO:0007669"/>
    <property type="project" value="InterPro"/>
</dbReference>
<dbReference type="GO" id="GO:0019843">
    <property type="term" value="F:rRNA binding"/>
    <property type="evidence" value="ECO:0007669"/>
    <property type="project" value="UniProtKB-UniRule"/>
</dbReference>
<dbReference type="GO" id="GO:0003735">
    <property type="term" value="F:structural constituent of ribosome"/>
    <property type="evidence" value="ECO:0007669"/>
    <property type="project" value="InterPro"/>
</dbReference>
<dbReference type="GO" id="GO:0000049">
    <property type="term" value="F:tRNA binding"/>
    <property type="evidence" value="ECO:0007669"/>
    <property type="project" value="UniProtKB-UniRule"/>
</dbReference>
<dbReference type="GO" id="GO:0006412">
    <property type="term" value="P:translation"/>
    <property type="evidence" value="ECO:0007669"/>
    <property type="project" value="UniProtKB-UniRule"/>
</dbReference>
<dbReference type="CDD" id="cd14869">
    <property type="entry name" value="uS7_Bacteria"/>
    <property type="match status" value="1"/>
</dbReference>
<dbReference type="FunFam" id="1.10.455.10:FF:000001">
    <property type="entry name" value="30S ribosomal protein S7"/>
    <property type="match status" value="1"/>
</dbReference>
<dbReference type="Gene3D" id="1.10.455.10">
    <property type="entry name" value="Ribosomal protein S7 domain"/>
    <property type="match status" value="1"/>
</dbReference>
<dbReference type="HAMAP" id="MF_00480_B">
    <property type="entry name" value="Ribosomal_uS7_B"/>
    <property type="match status" value="1"/>
</dbReference>
<dbReference type="InterPro" id="IPR000235">
    <property type="entry name" value="Ribosomal_uS7"/>
</dbReference>
<dbReference type="InterPro" id="IPR005717">
    <property type="entry name" value="Ribosomal_uS7_bac/org-type"/>
</dbReference>
<dbReference type="InterPro" id="IPR020606">
    <property type="entry name" value="Ribosomal_uS7_CS"/>
</dbReference>
<dbReference type="InterPro" id="IPR023798">
    <property type="entry name" value="Ribosomal_uS7_dom"/>
</dbReference>
<dbReference type="InterPro" id="IPR036823">
    <property type="entry name" value="Ribosomal_uS7_dom_sf"/>
</dbReference>
<dbReference type="NCBIfam" id="TIGR01029">
    <property type="entry name" value="rpsG_bact"/>
    <property type="match status" value="1"/>
</dbReference>
<dbReference type="PANTHER" id="PTHR11205">
    <property type="entry name" value="RIBOSOMAL PROTEIN S7"/>
    <property type="match status" value="1"/>
</dbReference>
<dbReference type="Pfam" id="PF00177">
    <property type="entry name" value="Ribosomal_S7"/>
    <property type="match status" value="1"/>
</dbReference>
<dbReference type="PIRSF" id="PIRSF002122">
    <property type="entry name" value="RPS7p_RPS7a_RPS5e_RPS7o"/>
    <property type="match status" value="1"/>
</dbReference>
<dbReference type="SUPFAM" id="SSF47973">
    <property type="entry name" value="Ribosomal protein S7"/>
    <property type="match status" value="1"/>
</dbReference>
<dbReference type="PROSITE" id="PS00052">
    <property type="entry name" value="RIBOSOMAL_S7"/>
    <property type="match status" value="1"/>
</dbReference>
<reference key="1">
    <citation type="submission" date="2006-08" db="EMBL/GenBank/DDBJ databases">
        <title>Complete sequence of Alkalilimnicola ehrilichei MLHE-1.</title>
        <authorList>
            <person name="Copeland A."/>
            <person name="Lucas S."/>
            <person name="Lapidus A."/>
            <person name="Barry K."/>
            <person name="Detter J.C."/>
            <person name="Glavina del Rio T."/>
            <person name="Hammon N."/>
            <person name="Israni S."/>
            <person name="Dalin E."/>
            <person name="Tice H."/>
            <person name="Pitluck S."/>
            <person name="Sims D."/>
            <person name="Brettin T."/>
            <person name="Bruce D."/>
            <person name="Han C."/>
            <person name="Tapia R."/>
            <person name="Gilna P."/>
            <person name="Schmutz J."/>
            <person name="Larimer F."/>
            <person name="Land M."/>
            <person name="Hauser L."/>
            <person name="Kyrpides N."/>
            <person name="Mikhailova N."/>
            <person name="Oremland R.S."/>
            <person name="Hoeft S.E."/>
            <person name="Switzer-Blum J."/>
            <person name="Kulp T."/>
            <person name="King G."/>
            <person name="Tabita R."/>
            <person name="Witte B."/>
            <person name="Santini J.M."/>
            <person name="Basu P."/>
            <person name="Hollibaugh J.T."/>
            <person name="Xie G."/>
            <person name="Stolz J.F."/>
            <person name="Richardson P."/>
        </authorList>
    </citation>
    <scope>NUCLEOTIDE SEQUENCE [LARGE SCALE GENOMIC DNA]</scope>
    <source>
        <strain>ATCC BAA-1101 / DSM 17681 / MLHE-1</strain>
    </source>
</reference>
<name>RS7_ALKEH</name>
<comment type="function">
    <text evidence="1">One of the primary rRNA binding proteins, it binds directly to 16S rRNA where it nucleates assembly of the head domain of the 30S subunit. Is located at the subunit interface close to the decoding center, probably blocks exit of the E-site tRNA.</text>
</comment>
<comment type="subunit">
    <text evidence="1">Part of the 30S ribosomal subunit. Contacts proteins S9 and S11.</text>
</comment>
<comment type="similarity">
    <text evidence="1">Belongs to the universal ribosomal protein uS7 family.</text>
</comment>
<evidence type="ECO:0000255" key="1">
    <source>
        <dbReference type="HAMAP-Rule" id="MF_00480"/>
    </source>
</evidence>
<evidence type="ECO:0000305" key="2"/>
<organism>
    <name type="scientific">Alkalilimnicola ehrlichii (strain ATCC BAA-1101 / DSM 17681 / MLHE-1)</name>
    <dbReference type="NCBI Taxonomy" id="187272"/>
    <lineage>
        <taxon>Bacteria</taxon>
        <taxon>Pseudomonadati</taxon>
        <taxon>Pseudomonadota</taxon>
        <taxon>Gammaproteobacteria</taxon>
        <taxon>Chromatiales</taxon>
        <taxon>Ectothiorhodospiraceae</taxon>
        <taxon>Alkalilimnicola</taxon>
    </lineage>
</organism>
<gene>
    <name evidence="1" type="primary">rpsG</name>
    <name type="ordered locus">Mlg_0454</name>
</gene>
<sequence length="156" mass="17911">MPRRREVPKRKVLADPKYGSELLTKFVNMVMRDGKRSVAEKIMYGALERIESKGHETPMEVLETALENVQPKVEVKSRRVGGATYQVPVEVRPERRTTLAMRWLLDAARKRGETTMALRLAGEMLDASESRGAAVKKREDTHRMAEANKAFSHYRW</sequence>
<feature type="chain" id="PRO_1000014141" description="Small ribosomal subunit protein uS7">
    <location>
        <begin position="1"/>
        <end position="156"/>
    </location>
</feature>
<keyword id="KW-1185">Reference proteome</keyword>
<keyword id="KW-0687">Ribonucleoprotein</keyword>
<keyword id="KW-0689">Ribosomal protein</keyword>
<keyword id="KW-0694">RNA-binding</keyword>
<keyword id="KW-0699">rRNA-binding</keyword>
<keyword id="KW-0820">tRNA-binding</keyword>
<protein>
    <recommendedName>
        <fullName evidence="1">Small ribosomal subunit protein uS7</fullName>
    </recommendedName>
    <alternativeName>
        <fullName evidence="2">30S ribosomal protein S7</fullName>
    </alternativeName>
</protein>
<proteinExistence type="inferred from homology"/>